<feature type="initiator methionine" description="Removed" evidence="1">
    <location>
        <position position="1"/>
    </location>
</feature>
<feature type="chain" id="PRO_0000073215" description="General stress protein 30">
    <location>
        <begin position="2"/>
        <end position="343"/>
    </location>
</feature>
<feature type="sequence conflict" description="In Ref. 1; BAA21581." evidence="2" ref="1">
    <original>D</original>
    <variation>N</variation>
    <location>
        <position position="329"/>
    </location>
</feature>
<reference key="1">
    <citation type="journal article" date="1995" name="DNA Res.">
        <title>Cloning and sequencing of a 36-kb region of the Bacillus subtilis genome between the gnt and iol operons.</title>
        <authorList>
            <person name="Yoshida K."/>
            <person name="Seki S."/>
            <person name="Fujimura M."/>
            <person name="Miwa Y."/>
            <person name="Fujita Y."/>
        </authorList>
    </citation>
    <scope>NUCLEOTIDE SEQUENCE [GENOMIC DNA]</scope>
    <source>
        <strain>168 / BGSC1A1</strain>
    </source>
</reference>
<reference key="2">
    <citation type="journal article" date="1997" name="Nature">
        <title>The complete genome sequence of the Gram-positive bacterium Bacillus subtilis.</title>
        <authorList>
            <person name="Kunst F."/>
            <person name="Ogasawara N."/>
            <person name="Moszer I."/>
            <person name="Albertini A.M."/>
            <person name="Alloni G."/>
            <person name="Azevedo V."/>
            <person name="Bertero M.G."/>
            <person name="Bessieres P."/>
            <person name="Bolotin A."/>
            <person name="Borchert S."/>
            <person name="Borriss R."/>
            <person name="Boursier L."/>
            <person name="Brans A."/>
            <person name="Braun M."/>
            <person name="Brignell S.C."/>
            <person name="Bron S."/>
            <person name="Brouillet S."/>
            <person name="Bruschi C.V."/>
            <person name="Caldwell B."/>
            <person name="Capuano V."/>
            <person name="Carter N.M."/>
            <person name="Choi S.-K."/>
            <person name="Codani J.-J."/>
            <person name="Connerton I.F."/>
            <person name="Cummings N.J."/>
            <person name="Daniel R.A."/>
            <person name="Denizot F."/>
            <person name="Devine K.M."/>
            <person name="Duesterhoeft A."/>
            <person name="Ehrlich S.D."/>
            <person name="Emmerson P.T."/>
            <person name="Entian K.-D."/>
            <person name="Errington J."/>
            <person name="Fabret C."/>
            <person name="Ferrari E."/>
            <person name="Foulger D."/>
            <person name="Fritz C."/>
            <person name="Fujita M."/>
            <person name="Fujita Y."/>
            <person name="Fuma S."/>
            <person name="Galizzi A."/>
            <person name="Galleron N."/>
            <person name="Ghim S.-Y."/>
            <person name="Glaser P."/>
            <person name="Goffeau A."/>
            <person name="Golightly E.J."/>
            <person name="Grandi G."/>
            <person name="Guiseppi G."/>
            <person name="Guy B.J."/>
            <person name="Haga K."/>
            <person name="Haiech J."/>
            <person name="Harwood C.R."/>
            <person name="Henaut A."/>
            <person name="Hilbert H."/>
            <person name="Holsappel S."/>
            <person name="Hosono S."/>
            <person name="Hullo M.-F."/>
            <person name="Itaya M."/>
            <person name="Jones L.-M."/>
            <person name="Joris B."/>
            <person name="Karamata D."/>
            <person name="Kasahara Y."/>
            <person name="Klaerr-Blanchard M."/>
            <person name="Klein C."/>
            <person name="Kobayashi Y."/>
            <person name="Koetter P."/>
            <person name="Koningstein G."/>
            <person name="Krogh S."/>
            <person name="Kumano M."/>
            <person name="Kurita K."/>
            <person name="Lapidus A."/>
            <person name="Lardinois S."/>
            <person name="Lauber J."/>
            <person name="Lazarevic V."/>
            <person name="Lee S.-M."/>
            <person name="Levine A."/>
            <person name="Liu H."/>
            <person name="Masuda S."/>
            <person name="Mauel C."/>
            <person name="Medigue C."/>
            <person name="Medina N."/>
            <person name="Mellado R.P."/>
            <person name="Mizuno M."/>
            <person name="Moestl D."/>
            <person name="Nakai S."/>
            <person name="Noback M."/>
            <person name="Noone D."/>
            <person name="O'Reilly M."/>
            <person name="Ogawa K."/>
            <person name="Ogiwara A."/>
            <person name="Oudega B."/>
            <person name="Park S.-H."/>
            <person name="Parro V."/>
            <person name="Pohl T.M."/>
            <person name="Portetelle D."/>
            <person name="Porwollik S."/>
            <person name="Prescott A.M."/>
            <person name="Presecan E."/>
            <person name="Pujic P."/>
            <person name="Purnelle B."/>
            <person name="Rapoport G."/>
            <person name="Rey M."/>
            <person name="Reynolds S."/>
            <person name="Rieger M."/>
            <person name="Rivolta C."/>
            <person name="Rocha E."/>
            <person name="Roche B."/>
            <person name="Rose M."/>
            <person name="Sadaie Y."/>
            <person name="Sato T."/>
            <person name="Scanlan E."/>
            <person name="Schleich S."/>
            <person name="Schroeter R."/>
            <person name="Scoffone F."/>
            <person name="Sekiguchi J."/>
            <person name="Sekowska A."/>
            <person name="Seror S.J."/>
            <person name="Serror P."/>
            <person name="Shin B.-S."/>
            <person name="Soldo B."/>
            <person name="Sorokin A."/>
            <person name="Tacconi E."/>
            <person name="Takagi T."/>
            <person name="Takahashi H."/>
            <person name="Takemaru K."/>
            <person name="Takeuchi M."/>
            <person name="Tamakoshi A."/>
            <person name="Tanaka T."/>
            <person name="Terpstra P."/>
            <person name="Tognoni A."/>
            <person name="Tosato V."/>
            <person name="Uchiyama S."/>
            <person name="Vandenbol M."/>
            <person name="Vannier F."/>
            <person name="Vassarotti A."/>
            <person name="Viari A."/>
            <person name="Wambutt R."/>
            <person name="Wedler E."/>
            <person name="Wedler H."/>
            <person name="Weitzenegger T."/>
            <person name="Winters P."/>
            <person name="Wipat A."/>
            <person name="Yamamoto H."/>
            <person name="Yamane K."/>
            <person name="Yasumoto K."/>
            <person name="Yata K."/>
            <person name="Yoshida K."/>
            <person name="Yoshikawa H.-F."/>
            <person name="Zumstein E."/>
            <person name="Yoshikawa H."/>
            <person name="Danchin A."/>
        </authorList>
    </citation>
    <scope>NUCLEOTIDE SEQUENCE [LARGE SCALE GENOMIC DNA]</scope>
    <source>
        <strain>168</strain>
    </source>
</reference>
<reference key="3">
    <citation type="journal article" date="1999" name="Genome Res.">
        <title>Detecting and analyzing DNA sequencing errors: toward a higher quality of the Bacillus subtilis genome sequence.</title>
        <authorList>
            <person name="Medigue C."/>
            <person name="Rose M."/>
            <person name="Viari A."/>
            <person name="Danchin A."/>
        </authorList>
    </citation>
    <scope>SEQUENCE REVISION</scope>
</reference>
<reference key="4">
    <citation type="journal article" date="2009" name="Microbiology">
        <title>From a consortium sequence to a unified sequence: the Bacillus subtilis 168 reference genome a decade later.</title>
        <authorList>
            <person name="Barbe V."/>
            <person name="Cruveiller S."/>
            <person name="Kunst F."/>
            <person name="Lenoble P."/>
            <person name="Meurice G."/>
            <person name="Sekowska A."/>
            <person name="Vallenet D."/>
            <person name="Wang T."/>
            <person name="Moszer I."/>
            <person name="Medigue C."/>
            <person name="Danchin A."/>
        </authorList>
    </citation>
    <scope>SEQUENCE REVISION TO 329</scope>
</reference>
<reference key="5">
    <citation type="journal article" date="1997" name="Electrophoresis">
        <title>First steps from a two-dimensional protein index towards a response-regulation map for Bacillus subtilis.</title>
        <authorList>
            <person name="Antelmann H."/>
            <person name="Bernhardt J."/>
            <person name="Schmid R."/>
            <person name="Mach H."/>
            <person name="Voelker U."/>
            <person name="Hecker M."/>
        </authorList>
    </citation>
    <scope>PROTEIN SEQUENCE OF 2-29</scope>
    <source>
        <strain>168 / IS58</strain>
    </source>
</reference>
<gene>
    <name type="primary">yxaB</name>
    <name type="ordered locus">BSU40030</name>
    <name type="ORF">S14B</name>
</gene>
<sequence length="343" mass="39764">MTVQEIKGKKLVKGIAPNVEPEALLNDKRKVFLFGSPSYTNIGDQAIAYAEEKFIKNHFPYYEYIEIMDYATDEGIELVKEIIREDDIVCFTGGGNLGNLYLDIEEDRRKVFSAFKDYKSISLPQSVYFEDTEEGQKEKKKTQDAYHQNTNLTIAARETQTLDVVKETFNSNVIFTPDMVLSLDIVPRELERDGVLFILRADKEKVTDEDFISQMKQWAEKTTYTERTDTVLDTVDTIDYADREKHFMEMLDRIGSSKLVITDRLHAMIFSIITKTPCLVFGNSYGKAKHSYRDWLESLNFIEYTDKNDVEELERMIDRLLQAEPNDVDLSKDFQPLIDFFAS</sequence>
<organism>
    <name type="scientific">Bacillus subtilis (strain 168)</name>
    <dbReference type="NCBI Taxonomy" id="224308"/>
    <lineage>
        <taxon>Bacteria</taxon>
        <taxon>Bacillati</taxon>
        <taxon>Bacillota</taxon>
        <taxon>Bacilli</taxon>
        <taxon>Bacillales</taxon>
        <taxon>Bacillaceae</taxon>
        <taxon>Bacillus</taxon>
    </lineage>
</organism>
<evidence type="ECO:0000269" key="1">
    <source>
    </source>
</evidence>
<evidence type="ECO:0000305" key="2"/>
<proteinExistence type="evidence at protein level"/>
<accession>P42101</accession>
<protein>
    <recommendedName>
        <fullName>General stress protein 30</fullName>
        <shortName>GSP30</shortName>
        <ecNumber>2.-.-.-</ecNumber>
    </recommendedName>
</protein>
<dbReference type="EC" id="2.-.-.-"/>
<dbReference type="EMBL" id="AB005554">
    <property type="protein sequence ID" value="BAA21581.1"/>
    <property type="status" value="ALT_FRAME"/>
    <property type="molecule type" value="Genomic_DNA"/>
</dbReference>
<dbReference type="EMBL" id="AL009126">
    <property type="protein sequence ID" value="CAB16040.3"/>
    <property type="molecule type" value="Genomic_DNA"/>
</dbReference>
<dbReference type="PIR" id="B70071">
    <property type="entry name" value="B70071"/>
</dbReference>
<dbReference type="RefSeq" id="NP_391883.3">
    <property type="nucleotide sequence ID" value="NC_000964.3"/>
</dbReference>
<dbReference type="RefSeq" id="WP_003242482.1">
    <property type="nucleotide sequence ID" value="NZ_OZ025638.1"/>
</dbReference>
<dbReference type="SMR" id="P42101"/>
<dbReference type="FunCoup" id="P42101">
    <property type="interactions" value="9"/>
</dbReference>
<dbReference type="STRING" id="224308.BSU40030"/>
<dbReference type="PaxDb" id="224308-BSU40030"/>
<dbReference type="EnsemblBacteria" id="CAB16040">
    <property type="protein sequence ID" value="CAB16040"/>
    <property type="gene ID" value="BSU_40030"/>
</dbReference>
<dbReference type="GeneID" id="937700"/>
<dbReference type="KEGG" id="bsu:BSU40030"/>
<dbReference type="PATRIC" id="fig|224308.179.peg.4330"/>
<dbReference type="eggNOG" id="COG5039">
    <property type="taxonomic scope" value="Bacteria"/>
</dbReference>
<dbReference type="InParanoid" id="P42101"/>
<dbReference type="OrthoDB" id="9807674at2"/>
<dbReference type="PhylomeDB" id="P42101"/>
<dbReference type="BioCyc" id="BSUB:BSU40030-MONOMER"/>
<dbReference type="Proteomes" id="UP000001570">
    <property type="component" value="Chromosome"/>
</dbReference>
<dbReference type="GO" id="GO:0016740">
    <property type="term" value="F:transferase activity"/>
    <property type="evidence" value="ECO:0007669"/>
    <property type="project" value="UniProtKB-KW"/>
</dbReference>
<dbReference type="InterPro" id="IPR007345">
    <property type="entry name" value="Polysacch_pyruvyl_Trfase"/>
</dbReference>
<dbReference type="Pfam" id="PF04230">
    <property type="entry name" value="PS_pyruv_trans"/>
    <property type="match status" value="1"/>
</dbReference>
<keyword id="KW-0903">Direct protein sequencing</keyword>
<keyword id="KW-1185">Reference proteome</keyword>
<keyword id="KW-0346">Stress response</keyword>
<keyword id="KW-0808">Transferase</keyword>
<name>GS30_BACSU</name>
<comment type="induction">
    <text>By heat shock, salt stress, oxidative stress, glucose limitation and oxygen limitation.</text>
</comment>
<comment type="similarity">
    <text evidence="2">Belongs to the polysaccharide pyruvyl transferase family.</text>
</comment>
<comment type="sequence caution" evidence="2">
    <conflict type="frameshift">
        <sequence resource="EMBL-CDS" id="BAA21581"/>
    </conflict>
</comment>